<evidence type="ECO:0000255" key="1">
    <source>
        <dbReference type="HAMAP-Rule" id="MF_00154"/>
    </source>
</evidence>
<protein>
    <recommendedName>
        <fullName evidence="1">Protoheme IX farnesyltransferase</fullName>
        <ecNumber evidence="1">2.5.1.141</ecNumber>
    </recommendedName>
    <alternativeName>
        <fullName evidence="1">Heme B farnesyltransferase</fullName>
    </alternativeName>
    <alternativeName>
        <fullName evidence="1">Heme O synthase</fullName>
    </alternativeName>
</protein>
<reference key="1">
    <citation type="submission" date="2007-09" db="EMBL/GenBank/DDBJ databases">
        <title>Complete sequence of chromosome of Serratia proteamaculans 568.</title>
        <authorList>
            <consortium name="US DOE Joint Genome Institute"/>
            <person name="Copeland A."/>
            <person name="Lucas S."/>
            <person name="Lapidus A."/>
            <person name="Barry K."/>
            <person name="Glavina del Rio T."/>
            <person name="Dalin E."/>
            <person name="Tice H."/>
            <person name="Pitluck S."/>
            <person name="Chain P."/>
            <person name="Malfatti S."/>
            <person name="Shin M."/>
            <person name="Vergez L."/>
            <person name="Schmutz J."/>
            <person name="Larimer F."/>
            <person name="Land M."/>
            <person name="Hauser L."/>
            <person name="Kyrpides N."/>
            <person name="Kim E."/>
            <person name="Taghavi S."/>
            <person name="Newman L."/>
            <person name="Vangronsveld J."/>
            <person name="van der Lelie D."/>
            <person name="Richardson P."/>
        </authorList>
    </citation>
    <scope>NUCLEOTIDE SEQUENCE [LARGE SCALE GENOMIC DNA]</scope>
    <source>
        <strain>568</strain>
    </source>
</reference>
<dbReference type="EC" id="2.5.1.141" evidence="1"/>
<dbReference type="EMBL" id="CP000826">
    <property type="protein sequence ID" value="ABV40190.1"/>
    <property type="molecule type" value="Genomic_DNA"/>
</dbReference>
<dbReference type="SMR" id="A8GAQ0"/>
<dbReference type="STRING" id="399741.Spro_1086"/>
<dbReference type="KEGG" id="spe:Spro_1086"/>
<dbReference type="eggNOG" id="COG0109">
    <property type="taxonomic scope" value="Bacteria"/>
</dbReference>
<dbReference type="HOGENOM" id="CLU_029631_0_0_6"/>
<dbReference type="OrthoDB" id="9814417at2"/>
<dbReference type="UniPathway" id="UPA00834">
    <property type="reaction ID" value="UER00712"/>
</dbReference>
<dbReference type="GO" id="GO:0005886">
    <property type="term" value="C:plasma membrane"/>
    <property type="evidence" value="ECO:0007669"/>
    <property type="project" value="UniProtKB-SubCell"/>
</dbReference>
<dbReference type="GO" id="GO:0008495">
    <property type="term" value="F:protoheme IX farnesyltransferase activity"/>
    <property type="evidence" value="ECO:0007669"/>
    <property type="project" value="UniProtKB-UniRule"/>
</dbReference>
<dbReference type="GO" id="GO:0048034">
    <property type="term" value="P:heme O biosynthetic process"/>
    <property type="evidence" value="ECO:0007669"/>
    <property type="project" value="UniProtKB-UniRule"/>
</dbReference>
<dbReference type="CDD" id="cd13957">
    <property type="entry name" value="PT_UbiA_Cox10"/>
    <property type="match status" value="1"/>
</dbReference>
<dbReference type="FunFam" id="1.10.357.140:FF:000001">
    <property type="entry name" value="Protoheme IX farnesyltransferase"/>
    <property type="match status" value="1"/>
</dbReference>
<dbReference type="Gene3D" id="1.10.357.140">
    <property type="entry name" value="UbiA prenyltransferase"/>
    <property type="match status" value="1"/>
</dbReference>
<dbReference type="HAMAP" id="MF_00154">
    <property type="entry name" value="CyoE_CtaB"/>
    <property type="match status" value="1"/>
</dbReference>
<dbReference type="InterPro" id="IPR006369">
    <property type="entry name" value="Protohaem_IX_farnesylTrfase"/>
</dbReference>
<dbReference type="InterPro" id="IPR000537">
    <property type="entry name" value="UbiA_prenyltransferase"/>
</dbReference>
<dbReference type="InterPro" id="IPR030470">
    <property type="entry name" value="UbiA_prenylTrfase_CS"/>
</dbReference>
<dbReference type="InterPro" id="IPR044878">
    <property type="entry name" value="UbiA_sf"/>
</dbReference>
<dbReference type="NCBIfam" id="TIGR01473">
    <property type="entry name" value="cyoE_ctaB"/>
    <property type="match status" value="1"/>
</dbReference>
<dbReference type="NCBIfam" id="NF003348">
    <property type="entry name" value="PRK04375.1-1"/>
    <property type="match status" value="1"/>
</dbReference>
<dbReference type="PANTHER" id="PTHR43448">
    <property type="entry name" value="PROTOHEME IX FARNESYLTRANSFERASE, MITOCHONDRIAL"/>
    <property type="match status" value="1"/>
</dbReference>
<dbReference type="PANTHER" id="PTHR43448:SF2">
    <property type="entry name" value="PROTOHEME IX FARNESYLTRANSFERASE, MITOCHONDRIAL"/>
    <property type="match status" value="1"/>
</dbReference>
<dbReference type="Pfam" id="PF01040">
    <property type="entry name" value="UbiA"/>
    <property type="match status" value="1"/>
</dbReference>
<dbReference type="PROSITE" id="PS00943">
    <property type="entry name" value="UBIA"/>
    <property type="match status" value="1"/>
</dbReference>
<comment type="function">
    <text evidence="1">Converts heme B (protoheme IX) to heme O by substitution of the vinyl group on carbon 2 of heme B porphyrin ring with a hydroxyethyl farnesyl side group.</text>
</comment>
<comment type="catalytic activity">
    <reaction evidence="1">
        <text>heme b + (2E,6E)-farnesyl diphosphate + H2O = Fe(II)-heme o + diphosphate</text>
        <dbReference type="Rhea" id="RHEA:28070"/>
        <dbReference type="ChEBI" id="CHEBI:15377"/>
        <dbReference type="ChEBI" id="CHEBI:33019"/>
        <dbReference type="ChEBI" id="CHEBI:60344"/>
        <dbReference type="ChEBI" id="CHEBI:60530"/>
        <dbReference type="ChEBI" id="CHEBI:175763"/>
        <dbReference type="EC" id="2.5.1.141"/>
    </reaction>
</comment>
<comment type="pathway">
    <text evidence="1">Porphyrin-containing compound metabolism; heme O biosynthesis; heme O from protoheme: step 1/1.</text>
</comment>
<comment type="subcellular location">
    <subcellularLocation>
        <location evidence="1">Cell inner membrane</location>
        <topology evidence="1">Multi-pass membrane protein</topology>
    </subcellularLocation>
</comment>
<comment type="miscellaneous">
    <text evidence="1">Carbon 2 of the heme B porphyrin ring is defined according to the Fischer nomenclature.</text>
</comment>
<comment type="similarity">
    <text evidence="1">Belongs to the UbiA prenyltransferase family. Protoheme IX farnesyltransferase subfamily.</text>
</comment>
<feature type="chain" id="PRO_0000346011" description="Protoheme IX farnesyltransferase">
    <location>
        <begin position="1"/>
        <end position="296"/>
    </location>
</feature>
<feature type="transmembrane region" description="Helical" evidence="1">
    <location>
        <begin position="8"/>
        <end position="28"/>
    </location>
</feature>
<feature type="transmembrane region" description="Helical" evidence="1">
    <location>
        <begin position="35"/>
        <end position="55"/>
    </location>
</feature>
<feature type="transmembrane region" description="Helical" evidence="1">
    <location>
        <begin position="84"/>
        <end position="104"/>
    </location>
</feature>
<feature type="transmembrane region" description="Helical" evidence="1">
    <location>
        <begin position="107"/>
        <end position="127"/>
    </location>
</feature>
<feature type="transmembrane region" description="Helical" evidence="1">
    <location>
        <begin position="132"/>
        <end position="152"/>
    </location>
</feature>
<feature type="transmembrane region" description="Helical" evidence="1">
    <location>
        <begin position="162"/>
        <end position="182"/>
    </location>
</feature>
<feature type="transmembrane region" description="Helical" evidence="1">
    <location>
        <begin position="208"/>
        <end position="228"/>
    </location>
</feature>
<feature type="transmembrane region" description="Helical" evidence="1">
    <location>
        <begin position="229"/>
        <end position="249"/>
    </location>
</feature>
<feature type="transmembrane region" description="Helical" evidence="1">
    <location>
        <begin position="263"/>
        <end position="283"/>
    </location>
</feature>
<accession>A8GAQ0</accession>
<proteinExistence type="inferred from homology"/>
<sequence>MIKQYLQVTKPGIIFGNLISVVGGFLLASKGSIDYPLFLATLVGVSLVVASGCVFNNYIDRDIDKKMERTKNRVLVKGLIAPSVSLVYATALGIAGFALLYIGANPLAMWLAVMGFVVYVGVYSLYMKRHSVYGTLIGSLSGAAPPVIGYCAVTNEFDAGALILLAIFSLWQMPHSYAIAIFRFKDYQAANIPVLPVVKGISVAKNHITVYIVAFMIATLMLTLGGYAGYKYLIVAAAVSVWWLGMALRGYKTENDSVWARKLFVFSIVAITSLSVMMSIDFSATAAPEALMTYVW</sequence>
<organism>
    <name type="scientific">Serratia proteamaculans (strain 568)</name>
    <dbReference type="NCBI Taxonomy" id="399741"/>
    <lineage>
        <taxon>Bacteria</taxon>
        <taxon>Pseudomonadati</taxon>
        <taxon>Pseudomonadota</taxon>
        <taxon>Gammaproteobacteria</taxon>
        <taxon>Enterobacterales</taxon>
        <taxon>Yersiniaceae</taxon>
        <taxon>Serratia</taxon>
    </lineage>
</organism>
<keyword id="KW-0997">Cell inner membrane</keyword>
<keyword id="KW-1003">Cell membrane</keyword>
<keyword id="KW-0350">Heme biosynthesis</keyword>
<keyword id="KW-0472">Membrane</keyword>
<keyword id="KW-0808">Transferase</keyword>
<keyword id="KW-0812">Transmembrane</keyword>
<keyword id="KW-1133">Transmembrane helix</keyword>
<name>CYOE_SERP5</name>
<gene>
    <name evidence="1" type="primary">cyoE</name>
    <name type="ordered locus">Spro_1086</name>
</gene>